<organismHost>
    <name type="scientific">Acanthamoeba polyphaga</name>
    <name type="common">Amoeba</name>
    <dbReference type="NCBI Taxonomy" id="5757"/>
</organismHost>
<dbReference type="EMBL" id="AY653733">
    <property type="protein sequence ID" value="AAV50391.1"/>
    <property type="molecule type" value="Genomic_DNA"/>
</dbReference>
<dbReference type="KEGG" id="vg:9924715"/>
<dbReference type="OrthoDB" id="32128at10239"/>
<dbReference type="Proteomes" id="UP000001134">
    <property type="component" value="Genome"/>
</dbReference>
<feature type="chain" id="PRO_0000071212" description="Uncharacterized protein L116">
    <location>
        <begin position="1"/>
        <end position="563"/>
    </location>
</feature>
<feature type="region of interest" description="Disordered" evidence="1">
    <location>
        <begin position="30"/>
        <end position="303"/>
    </location>
</feature>
<feature type="compositionally biased region" description="Basic and acidic residues" evidence="1">
    <location>
        <begin position="36"/>
        <end position="56"/>
    </location>
</feature>
<feature type="compositionally biased region" description="Polar residues" evidence="1">
    <location>
        <begin position="61"/>
        <end position="72"/>
    </location>
</feature>
<feature type="compositionally biased region" description="Basic and acidic residues" evidence="1">
    <location>
        <begin position="101"/>
        <end position="115"/>
    </location>
</feature>
<feature type="compositionally biased region" description="Basic and acidic residues" evidence="1">
    <location>
        <begin position="123"/>
        <end position="276"/>
    </location>
</feature>
<feature type="compositionally biased region" description="Basic and acidic residues" evidence="1">
    <location>
        <begin position="282"/>
        <end position="303"/>
    </location>
</feature>
<proteinExistence type="inferred from homology"/>
<keyword id="KW-1185">Reference proteome</keyword>
<comment type="similarity">
    <text evidence="2">Belongs to the mimivirus L41 family.</text>
</comment>
<accession>Q5UPJ3</accession>
<name>YL116_MIMIV</name>
<reference key="1">
    <citation type="journal article" date="2004" name="Science">
        <title>The 1.2-megabase genome sequence of Mimivirus.</title>
        <authorList>
            <person name="Raoult D."/>
            <person name="Audic S."/>
            <person name="Robert C."/>
            <person name="Abergel C."/>
            <person name="Renesto P."/>
            <person name="Ogata H."/>
            <person name="La Scola B."/>
            <person name="Susan M."/>
            <person name="Claverie J.-M."/>
        </authorList>
    </citation>
    <scope>NUCLEOTIDE SEQUENCE [LARGE SCALE GENOMIC DNA]</scope>
    <source>
        <strain>Rowbotham-Bradford</strain>
    </source>
</reference>
<sequence>MDSLYKWFSTIYQGKDTCIDQDVFLSTEIQSIEIQPEEKPSEEKQPEEKSSEEKPKLQPVSAINSEKTQKPISSVALPNEDFNKLLYNFPSLSRRPQPKTTTERPQPKTTMDDKQVVVTFITERGRSCELSSERSRYRSPERSRYRSPERSRYRSPERSRYRSPERSRYRSPERSRYRSPERSHYRSPDRSHYRSHNKSTERSHYRSTERSRYRSPERSHYRSPEISRKRSRDESREKSLGRSRKMSRDESREKSLNESHKRSRDESQEKSYEPRPAKKLREKSPDEHQEKHQEKSPEKQVEITKPLEDYIALPKENVPDVFEIEKSQSTRYFSEKARIYFKNTHDGSIVWYKDDAIHRDGDLPAVIESDGTVKYYRDGKIHREGDKPAIIIPGKGKSWYLDGKLHRDGDEPAYVSNDGTLKWYRHGLLHRENDNPAIINLDGSMVWYVDGKLHRGGDLPAIIKPGICFKWYVNGHVHRDNDLPAIINIFKMPKLCNMYRIGDMVWYQHGQRHRSGGKPAIVTFRGVLFYFENGRRIYESPNGKEYYNMTANKLMMDFPYLLE</sequence>
<organism>
    <name type="scientific">Acanthamoeba polyphaga mimivirus</name>
    <name type="common">APMV</name>
    <dbReference type="NCBI Taxonomy" id="212035"/>
    <lineage>
        <taxon>Viruses</taxon>
        <taxon>Varidnaviria</taxon>
        <taxon>Bamfordvirae</taxon>
        <taxon>Nucleocytoviricota</taxon>
        <taxon>Megaviricetes</taxon>
        <taxon>Imitervirales</taxon>
        <taxon>Mimiviridae</taxon>
        <taxon>Megamimivirinae</taxon>
        <taxon>Mimivirus</taxon>
        <taxon>Mimivirus bradfordmassiliense</taxon>
    </lineage>
</organism>
<protein>
    <recommendedName>
        <fullName>Uncharacterized protein L116</fullName>
    </recommendedName>
</protein>
<evidence type="ECO:0000256" key="1">
    <source>
        <dbReference type="SAM" id="MobiDB-lite"/>
    </source>
</evidence>
<evidence type="ECO:0000305" key="2"/>
<gene>
    <name type="ordered locus">MIMI_L116</name>
</gene>